<keyword id="KW-0067">ATP-binding</keyword>
<keyword id="KW-0175">Coiled coil</keyword>
<keyword id="KW-0325">Glycoprotein</keyword>
<keyword id="KW-1032">Host cell membrane</keyword>
<keyword id="KW-1035">Host cytoplasm</keyword>
<keyword id="KW-1037">Host cytoskeleton</keyword>
<keyword id="KW-1043">Host membrane</keyword>
<keyword id="KW-0472">Membrane</keyword>
<keyword id="KW-0547">Nucleotide-binding</keyword>
<keyword id="KW-1185">Reference proteome</keyword>
<sequence length="1501" mass="176120">MGNTLDSNKPKNFVTYADYKYIGKLNNKNEHHGIGIILYNSGESFYGSFINGKKEGKGIYIDKNLTRYINTWVDNKVFGKVKVVPYNSNRVYYFYYKNYMIEKCIYFDNNINNKESHHKNNIYNNYDNNSYNNNSCDDEEKRKYPIGVTKFKEDLSNYIHSTHIMKKNNKLFNKNDNEYNIFSSSLSYSSDSENINLLDILKKKKNKKNKKNKKKKNKKTKNTQILSCTQHKMYEHNMNESNFTKKDNVNCEHTDKMNISLHEKNDKKNEKKNEKKNKKKKLFKYFSNNIENLIIENYQTWSLREVIQWLMLCNVPVKWLISFYKNNITGDKLKYININTIRNELGIIAYGHAIKILQLIKNLQVMAYNKKFNNLIQIEEYKNYIRQKENTNKNIKKGKNIKKEKKKKKEKNIKKEKKKKKKETKKFNNMDKKYIDLAIHKNVKNIQNDTFYNKHENIYNCKNQTNFIYQNDSEIKKIMNKKKVSFEYDNNEEKKKKNIIKFIKNNKSLQNSNGEYYLINHLSKGICSDSIFYKSSQSKSSSQLSSPLSSPLSSPSPSSSPSSSPSSSPSSSPSSSPSPSSSPSPSSSPSSSPSSSPSSPPSPLSYKDNFPISSSCSSLERLPSYEKKLLSSSQSNIEHIKNLPLDVLSNNNSSANIKIKKSKSKYNNDKKEQKKLPLILNKSSSEFSPSHSYTSKSYHYNIKPSLQSSSNNSSDSSYSISSTCSSSSSYVSSLYSNRSNDILNFYRNKIIKYCNNIYMNTKLAYSYMNGFIIPHEDLIFIHPIENYYMDNTNEKNNINNPYTKEKIMNHNFSFNTKNNTSFIDINTNIFSSNKQQNINNFGKYKKMKSRMFKGKYMGKEVAIKILVGKIKNFKKLHQILYNLYNLRHSNLVLIMGVSIHYPFVFIIYEYMKNKCLFSYLHCIKYKHVYISTFLQRYKTLLHITQQEKIKKTNNINNNNNINHNNINNNNINHNNINHNNINNNNINNNNINYNKDYNNKKKKEDEQHNIEHQDTFIDLPEKSNISSDDNNSTDISQIQKENFHFLNKKIEENKNIIYDDHTSTLSDHSIHNINKSYDNVYKNKMNIFHYQHNVLCGAYDNNDNNINDNDIYCNNIYDNNINDNHIYCNNINDNHIYCNNINDNHIYCNNIYDHHKNTSLNSKEQNTDHNIEQINECNKYASETKYNIKKSNLKNNIISHKNFQKCNQIQMNQPYTFPPYQKELSSYLKNEKIKRKRKVLFSYLKTHIHFNSQQINDQHNRLSVQKIMKIITDVTLACTYLEKEKMSPINLKPTNILLDESLNAKISDFGISKIENCLDMNIDYSYKISSNSVIKINKKEYEQKKAKKIKIVNKNNNDLLYLYDHNNNVYKYNTQYIDVTYNNSYPSIFYWTPPEILRGKKNKKFYSDIYAFGIILWEMLSNDIPYNYPFASHIMAVVGYANEELSFNNIPVSIQSLIKACVNRNKYKRPTFEHILKTISTLYQKANTKVEDALISFMDGT</sequence>
<protein>
    <recommendedName>
        <fullName evidence="9">Inactive protein tyrosine kinase pTKL</fullName>
    </recommendedName>
    <alternativeName>
        <fullName evidence="8">PfpTKL</fullName>
    </alternativeName>
    <alternativeName>
        <fullName evidence="8">Pseudo-tyrosine kinase-like protein</fullName>
    </alternativeName>
</protein>
<comment type="subunit">
    <text evidence="7">Interacts (via RVxF motif 1 and/or 2) with phosphatase PP1C (PubMed:31148576). May interact (via SAM domain) with SERA5 (via C-terminus) (PubMed:31148576).</text>
</comment>
<comment type="subcellular location">
    <subcellularLocation>
        <location evidence="1">Parasitophorous vacuole</location>
    </subcellularLocation>
    <subcellularLocation>
        <location evidence="1">Host cell membrane</location>
        <topology evidence="1">Peripheral membrane protein</topology>
    </subcellularLocation>
    <subcellularLocation>
        <location evidence="1">Host cytoplasm</location>
        <location evidence="1">Host cytoskeleton</location>
    </subcellularLocation>
    <subcellularLocation>
        <location evidence="1">Host cytoplasm</location>
    </subcellularLocation>
    <text evidence="1">During the trophozoite stages, secreted into the parasitophorous vacuole and into the host erythrocyte cytoplasm. At the schizont stage, localizes to the parasitophorous vacuole but not to the host erythrocyte cytoplasm.</text>
</comment>
<comment type="domain">
    <text evidence="3 7">The protein kinase domain is predicted to be catalytically inactive (By similarity). There is a second N-terminal lobe-like kinase domain at residues 830-1095 that contains functional ATP binding sites (PubMed:31148576).</text>
</comment>
<comment type="similarity">
    <text evidence="9">Belongs to the protein kinase superfamily. TKL Ser/Thr protein kinase family.</text>
</comment>
<comment type="caution">
    <text evidence="7">Although it belongs to the kinase superfamily, contains an asparagine residue at the position of the canonical catalytic aspartic acid and does not have kinase activity (PubMed:31148576). However, can bind ATP (PubMed:31148576).</text>
</comment>
<gene>
    <name evidence="8" type="primary">pTKL</name>
    <name evidence="11" type="ORF">PF3D7_1106800</name>
</gene>
<evidence type="ECO:0000250" key="1">
    <source>
        <dbReference type="UniProtKB" id="A0A509AIU5"/>
    </source>
</evidence>
<evidence type="ECO:0000255" key="2"/>
<evidence type="ECO:0000255" key="3">
    <source>
        <dbReference type="PROSITE-ProRule" id="PRU00159"/>
    </source>
</evidence>
<evidence type="ECO:0000255" key="4">
    <source>
        <dbReference type="PROSITE-ProRule" id="PRU00184"/>
    </source>
</evidence>
<evidence type="ECO:0000255" key="5">
    <source>
        <dbReference type="PROSITE-ProRule" id="PRU00498"/>
    </source>
</evidence>
<evidence type="ECO:0000256" key="6">
    <source>
        <dbReference type="SAM" id="MobiDB-lite"/>
    </source>
</evidence>
<evidence type="ECO:0000269" key="7">
    <source>
    </source>
</evidence>
<evidence type="ECO:0000303" key="8">
    <source>
    </source>
</evidence>
<evidence type="ECO:0000305" key="9"/>
<evidence type="ECO:0000305" key="10">
    <source>
    </source>
</evidence>
<evidence type="ECO:0000312" key="11">
    <source>
        <dbReference type="EMBL" id="CZT98734.1"/>
    </source>
</evidence>
<evidence type="ECO:0000312" key="12">
    <source>
        <dbReference type="Proteomes" id="UP000001450"/>
    </source>
</evidence>
<dbReference type="EMBL" id="LN999945">
    <property type="protein sequence ID" value="CZT98734.1"/>
    <property type="molecule type" value="Genomic_DNA"/>
</dbReference>
<dbReference type="RefSeq" id="XP_001347755.2">
    <property type="nucleotide sequence ID" value="XM_001347719.2"/>
</dbReference>
<dbReference type="FunCoup" id="Q8IIT5">
    <property type="interactions" value="2"/>
</dbReference>
<dbReference type="STRING" id="36329.Q8IIT5"/>
<dbReference type="GlyCosmos" id="Q8IIT5">
    <property type="glycosylation" value="22 sites, No reported glycans"/>
</dbReference>
<dbReference type="PaxDb" id="5833-PF11_0079"/>
<dbReference type="EnsemblProtists" id="CZT98734">
    <property type="protein sequence ID" value="CZT98734"/>
    <property type="gene ID" value="PF3D7_1106800"/>
</dbReference>
<dbReference type="GeneID" id="810631"/>
<dbReference type="KEGG" id="pfa:PF3D7_1106800"/>
<dbReference type="VEuPathDB" id="PlasmoDB:PF3D7_1106800"/>
<dbReference type="HOGENOM" id="CLU_248690_0_0_1"/>
<dbReference type="InParanoid" id="Q8IIT5"/>
<dbReference type="OMA" id="HIYCNNI"/>
<dbReference type="OrthoDB" id="339325at2759"/>
<dbReference type="PhylomeDB" id="Q8IIT5"/>
<dbReference type="Reactome" id="R-PFA-430116">
    <property type="pathway name" value="GP1b-IX-V activation signalling"/>
</dbReference>
<dbReference type="Reactome" id="R-PFA-5673000">
    <property type="pathway name" value="RAF activation"/>
</dbReference>
<dbReference type="Reactome" id="R-PFA-5674499">
    <property type="pathway name" value="Negative feedback regulation of MAPK pathway"/>
</dbReference>
<dbReference type="Reactome" id="R-PFA-5675221">
    <property type="pathway name" value="Negative regulation of MAPK pathway"/>
</dbReference>
<dbReference type="Reactome" id="R-PFA-5689880">
    <property type="pathway name" value="Ub-specific processing proteases"/>
</dbReference>
<dbReference type="Proteomes" id="UP000001450">
    <property type="component" value="Chromosome 11"/>
</dbReference>
<dbReference type="GO" id="GO:0020002">
    <property type="term" value="C:host cell plasma membrane"/>
    <property type="evidence" value="ECO:0007669"/>
    <property type="project" value="UniProtKB-SubCell"/>
</dbReference>
<dbReference type="GO" id="GO:0044163">
    <property type="term" value="C:host cytoskeleton"/>
    <property type="evidence" value="ECO:0007669"/>
    <property type="project" value="UniProtKB-SubCell"/>
</dbReference>
<dbReference type="GO" id="GO:0016020">
    <property type="term" value="C:membrane"/>
    <property type="evidence" value="ECO:0007669"/>
    <property type="project" value="UniProtKB-KW"/>
</dbReference>
<dbReference type="GO" id="GO:0020003">
    <property type="term" value="C:symbiont-containing vacuole"/>
    <property type="evidence" value="ECO:0007669"/>
    <property type="project" value="UniProtKB-SubCell"/>
</dbReference>
<dbReference type="GO" id="GO:0005524">
    <property type="term" value="F:ATP binding"/>
    <property type="evidence" value="ECO:0007669"/>
    <property type="project" value="UniProtKB-KW"/>
</dbReference>
<dbReference type="GO" id="GO:0007165">
    <property type="term" value="P:signal transduction"/>
    <property type="evidence" value="ECO:0000318"/>
    <property type="project" value="GO_Central"/>
</dbReference>
<dbReference type="Gene3D" id="3.30.200.20">
    <property type="entry name" value="Phosphorylase Kinase, domain 1"/>
    <property type="match status" value="1"/>
</dbReference>
<dbReference type="Gene3D" id="1.10.150.50">
    <property type="entry name" value="Transcription Factor, Ets-1"/>
    <property type="match status" value="1"/>
</dbReference>
<dbReference type="Gene3D" id="1.10.510.10">
    <property type="entry name" value="Transferase(Phosphotransferase) domain 1"/>
    <property type="match status" value="1"/>
</dbReference>
<dbReference type="InterPro" id="IPR011009">
    <property type="entry name" value="Kinase-like_dom_sf"/>
</dbReference>
<dbReference type="InterPro" id="IPR000719">
    <property type="entry name" value="Prot_kinase_dom"/>
</dbReference>
<dbReference type="InterPro" id="IPR001660">
    <property type="entry name" value="SAM"/>
</dbReference>
<dbReference type="InterPro" id="IPR013761">
    <property type="entry name" value="SAM/pointed_sf"/>
</dbReference>
<dbReference type="InterPro" id="IPR001245">
    <property type="entry name" value="Ser-Thr/Tyr_kinase_cat_dom"/>
</dbReference>
<dbReference type="InterPro" id="IPR051681">
    <property type="entry name" value="Ser/Thr_Kinases-Pseudokinases"/>
</dbReference>
<dbReference type="PANTHER" id="PTHR44329:SF140">
    <property type="entry name" value="INACTIVE PROTEIN TYROSINE KINASE PTKL"/>
    <property type="match status" value="1"/>
</dbReference>
<dbReference type="PANTHER" id="PTHR44329">
    <property type="entry name" value="SERINE/THREONINE-PROTEIN KINASE TNNI3K-RELATED"/>
    <property type="match status" value="1"/>
</dbReference>
<dbReference type="Pfam" id="PF07714">
    <property type="entry name" value="PK_Tyr_Ser-Thr"/>
    <property type="match status" value="2"/>
</dbReference>
<dbReference type="Pfam" id="PF07647">
    <property type="entry name" value="SAM_2"/>
    <property type="match status" value="1"/>
</dbReference>
<dbReference type="SMART" id="SM00454">
    <property type="entry name" value="SAM"/>
    <property type="match status" value="1"/>
</dbReference>
<dbReference type="SUPFAM" id="SSF82185">
    <property type="entry name" value="Histone H3 K4-specific methyltransferase SET7/9 N-terminal domain"/>
    <property type="match status" value="1"/>
</dbReference>
<dbReference type="SUPFAM" id="SSF56112">
    <property type="entry name" value="Protein kinase-like (PK-like)"/>
    <property type="match status" value="1"/>
</dbReference>
<dbReference type="SUPFAM" id="SSF47769">
    <property type="entry name" value="SAM/Pointed domain"/>
    <property type="match status" value="1"/>
</dbReference>
<dbReference type="PROSITE" id="PS50011">
    <property type="entry name" value="PROTEIN_KINASE_DOM"/>
    <property type="match status" value="1"/>
</dbReference>
<dbReference type="PROSITE" id="PS50105">
    <property type="entry name" value="SAM_DOMAIN"/>
    <property type="match status" value="1"/>
</dbReference>
<reference evidence="12" key="1">
    <citation type="journal article" date="2002" name="Nature">
        <title>Genome sequence of the human malaria parasite Plasmodium falciparum.</title>
        <authorList>
            <person name="Gardner M.J."/>
            <person name="Hall N."/>
            <person name="Fung E."/>
            <person name="White O."/>
            <person name="Berriman M."/>
            <person name="Hyman R.W."/>
            <person name="Carlton J.M."/>
            <person name="Pain A."/>
            <person name="Nelson K.E."/>
            <person name="Bowman S."/>
            <person name="Paulsen I.T."/>
            <person name="James K.D."/>
            <person name="Eisen J.A."/>
            <person name="Rutherford K.M."/>
            <person name="Salzberg S.L."/>
            <person name="Craig A."/>
            <person name="Kyes S."/>
            <person name="Chan M.-S."/>
            <person name="Nene V."/>
            <person name="Shallom S.J."/>
            <person name="Suh B."/>
            <person name="Peterson J."/>
            <person name="Angiuoli S."/>
            <person name="Pertea M."/>
            <person name="Allen J."/>
            <person name="Selengut J."/>
            <person name="Haft D."/>
            <person name="Mather M.W."/>
            <person name="Vaidya A.B."/>
            <person name="Martin D.M.A."/>
            <person name="Fairlamb A.H."/>
            <person name="Fraunholz M.J."/>
            <person name="Roos D.S."/>
            <person name="Ralph S.A."/>
            <person name="McFadden G.I."/>
            <person name="Cummings L.M."/>
            <person name="Subramanian G.M."/>
            <person name="Mungall C."/>
            <person name="Venter J.C."/>
            <person name="Carucci D.J."/>
            <person name="Hoffman S.L."/>
            <person name="Newbold C."/>
            <person name="Davis R.W."/>
            <person name="Fraser C.M."/>
            <person name="Barrell B.G."/>
        </authorList>
    </citation>
    <scope>NUCLEOTIDE SEQUENCE [LARGE SCALE GENOMIC DNA]</scope>
    <source>
        <strain evidence="12">3D7</strain>
    </source>
</reference>
<reference evidence="9" key="2">
    <citation type="journal article" date="2019" name="Sci. Rep.">
        <title>Plasmodium pseudo-Tyrosine Kinase-like binds PP1 and SERA5 and is exported to host erythrocytes.</title>
        <authorList>
            <person name="Gnangnon B."/>
            <person name="Freville A."/>
            <person name="Cailliau K."/>
            <person name="Leroy C."/>
            <person name="De Witte C."/>
            <person name="Tulasne D."/>
            <person name="Martoriarti A."/>
            <person name="Jung V."/>
            <person name="Guerrera I.C."/>
            <person name="Marion S."/>
            <person name="Khalife J."/>
            <person name="Pierrot C."/>
        </authorList>
    </citation>
    <scope>LACK OF CATALYTIC ACTIVITY</scope>
    <scope>INTERACTION WITH SERA5 AND PP1C</scope>
    <scope>DOMAIN</scope>
</reference>
<name>PTKL_PLAF7</name>
<proteinExistence type="evidence at protein level"/>
<accession>Q8IIT5</accession>
<feature type="chain" id="PRO_0000450198" description="Inactive protein tyrosine kinase pTKL">
    <location>
        <begin position="1"/>
        <end position="1501"/>
    </location>
</feature>
<feature type="domain" description="SAM" evidence="4">
    <location>
        <begin position="301"/>
        <end position="366"/>
    </location>
</feature>
<feature type="domain" description="Protein kinase" evidence="3">
    <location>
        <begin position="1088"/>
        <end position="1483"/>
    </location>
</feature>
<feature type="region of interest" description="Disordered" evidence="6">
    <location>
        <begin position="204"/>
        <end position="223"/>
    </location>
</feature>
<feature type="region of interest" description="Disordered" evidence="6">
    <location>
        <begin position="257"/>
        <end position="276"/>
    </location>
</feature>
<feature type="region of interest" description="Disordered" evidence="6">
    <location>
        <begin position="392"/>
        <end position="425"/>
    </location>
</feature>
<feature type="region of interest" description="Disordered" evidence="6">
    <location>
        <begin position="543"/>
        <end position="607"/>
    </location>
</feature>
<feature type="region of interest" description="Disordered" evidence="6">
    <location>
        <begin position="659"/>
        <end position="678"/>
    </location>
</feature>
<feature type="coiled-coil region" evidence="2">
    <location>
        <begin position="399"/>
        <end position="433"/>
    </location>
</feature>
<feature type="short sequence motif" description="RVxF motif 1" evidence="10">
    <location>
        <begin position="483"/>
        <end position="486"/>
    </location>
</feature>
<feature type="short sequence motif" description="RVxF motif 2" evidence="10">
    <location>
        <begin position="1238"/>
        <end position="1241"/>
    </location>
</feature>
<feature type="compositionally biased region" description="Basic residues" evidence="6">
    <location>
        <begin position="204"/>
        <end position="221"/>
    </location>
</feature>
<feature type="compositionally biased region" description="Basic and acidic residues" evidence="6">
    <location>
        <begin position="257"/>
        <end position="273"/>
    </location>
</feature>
<feature type="compositionally biased region" description="Basic residues" evidence="6">
    <location>
        <begin position="394"/>
        <end position="424"/>
    </location>
</feature>
<feature type="compositionally biased region" description="Low complexity" evidence="6">
    <location>
        <begin position="543"/>
        <end position="597"/>
    </location>
</feature>
<feature type="compositionally biased region" description="Basic and acidic residues" evidence="6">
    <location>
        <begin position="666"/>
        <end position="675"/>
    </location>
</feature>
<feature type="binding site" evidence="3">
    <location>
        <begin position="836"/>
        <end position="844"/>
    </location>
    <ligand>
        <name>ATP</name>
        <dbReference type="ChEBI" id="CHEBI:30616"/>
    </ligand>
</feature>
<feature type="binding site" evidence="3">
    <location>
        <position position="864"/>
    </location>
    <ligand>
        <name>ATP</name>
        <dbReference type="ChEBI" id="CHEBI:30616"/>
    </ligand>
</feature>
<feature type="glycosylation site" description="N-linked (GlcNAc...) asparagine" evidence="5">
    <location>
        <position position="64"/>
    </location>
</feature>
<feature type="glycosylation site" description="N-linked (GlcNAc...) asparagine" evidence="5">
    <location>
        <position position="128"/>
    </location>
</feature>
<feature type="glycosylation site" description="N-linked (GlcNAc...) asparagine" evidence="5">
    <location>
        <position position="133"/>
    </location>
</feature>
<feature type="glycosylation site" description="N-linked (GlcNAc...) asparagine" evidence="5">
    <location>
        <position position="239"/>
    </location>
</feature>
<feature type="glycosylation site" description="N-linked (GlcNAc...) asparagine" evidence="5">
    <location>
        <position position="242"/>
    </location>
</feature>
<feature type="glycosylation site" description="N-linked (GlcNAc...) asparagine" evidence="5">
    <location>
        <position position="258"/>
    </location>
</feature>
<feature type="glycosylation site" description="N-linked (GlcNAc...) asparagine" evidence="5">
    <location>
        <position position="327"/>
    </location>
</feature>
<feature type="glycosylation site" description="N-linked (GlcNAc...) asparagine" evidence="5">
    <location>
        <position position="448"/>
    </location>
</feature>
<feature type="glycosylation site" description="N-linked (GlcNAc...) asparagine" evidence="5">
    <location>
        <position position="463"/>
    </location>
</feature>
<feature type="glycosylation site" description="N-linked (GlcNAc...) asparagine" evidence="5">
    <location>
        <position position="471"/>
    </location>
</feature>
<feature type="glycosylation site" description="N-linked (GlcNAc...) asparagine" evidence="5">
    <location>
        <position position="506"/>
    </location>
</feature>
<feature type="glycosylation site" description="N-linked (GlcNAc...) asparagine" evidence="5">
    <location>
        <position position="652"/>
    </location>
</feature>
<feature type="glycosylation site" description="N-linked (GlcNAc...) asparagine" evidence="5">
    <location>
        <position position="681"/>
    </location>
</feature>
<feature type="glycosylation site" description="N-linked (GlcNAc...) asparagine" evidence="5">
    <location>
        <position position="712"/>
    </location>
</feature>
<feature type="glycosylation site" description="N-linked (GlcNAc...) asparagine" evidence="5">
    <location>
        <position position="737"/>
    </location>
</feature>
<feature type="glycosylation site" description="N-linked (GlcNAc...) asparagine" evidence="5">
    <location>
        <position position="811"/>
    </location>
</feature>
<feature type="glycosylation site" description="N-linked (GlcNAc...) asparagine" evidence="5">
    <location>
        <position position="819"/>
    </location>
</feature>
<feature type="glycosylation site" description="N-linked (GlcNAc...) asparagine" evidence="5">
    <location>
        <position position="1024"/>
    </location>
</feature>
<feature type="glycosylation site" description="N-linked (GlcNAc...) asparagine" evidence="5">
    <location>
        <position position="1031"/>
    </location>
</feature>
<feature type="glycosylation site" description="N-linked (GlcNAc...) asparagine" evidence="5">
    <location>
        <position position="1074"/>
    </location>
</feature>
<feature type="glycosylation site" description="N-linked (GlcNAc...) asparagine" evidence="5">
    <location>
        <position position="1157"/>
    </location>
</feature>
<feature type="glycosylation site" description="N-linked (GlcNAc...) asparagine" evidence="5">
    <location>
        <position position="1382"/>
    </location>
</feature>
<organism evidence="12">
    <name type="scientific">Plasmodium falciparum (isolate 3D7)</name>
    <dbReference type="NCBI Taxonomy" id="36329"/>
    <lineage>
        <taxon>Eukaryota</taxon>
        <taxon>Sar</taxon>
        <taxon>Alveolata</taxon>
        <taxon>Apicomplexa</taxon>
        <taxon>Aconoidasida</taxon>
        <taxon>Haemosporida</taxon>
        <taxon>Plasmodiidae</taxon>
        <taxon>Plasmodium</taxon>
        <taxon>Plasmodium (Laverania)</taxon>
    </lineage>
</organism>